<feature type="chain" id="PRO_0000421813" description="Protein DJ-1 homolog A">
    <location>
        <begin position="1"/>
        <end position="392"/>
    </location>
</feature>
<feature type="domain" description="PfpI endopeptidase 1">
    <location>
        <begin position="6"/>
        <end position="174"/>
    </location>
</feature>
<feature type="domain" description="PfpI endopeptidase 2">
    <location>
        <begin position="212"/>
        <end position="378"/>
    </location>
</feature>
<feature type="splice variant" id="VSP_046013" description="In isoform 2." evidence="4">
    <location>
        <begin position="1"/>
        <end position="23"/>
    </location>
</feature>
<accession>Q9FPF0</accession>
<accession>Q9LKA6</accession>
<dbReference type="EMBL" id="AP000370">
    <property type="protein sequence ID" value="BAA97062.1"/>
    <property type="molecule type" value="Genomic_DNA"/>
</dbReference>
<dbReference type="EMBL" id="CP002686">
    <property type="protein sequence ID" value="AEE75598.1"/>
    <property type="molecule type" value="Genomic_DNA"/>
</dbReference>
<dbReference type="EMBL" id="CP002686">
    <property type="protein sequence ID" value="AEE75599.1"/>
    <property type="molecule type" value="Genomic_DNA"/>
</dbReference>
<dbReference type="EMBL" id="CP002686">
    <property type="protein sequence ID" value="AEE75600.1"/>
    <property type="molecule type" value="Genomic_DNA"/>
</dbReference>
<dbReference type="EMBL" id="AF326856">
    <property type="protein sequence ID" value="AAG41438.1"/>
    <property type="molecule type" value="mRNA"/>
</dbReference>
<dbReference type="EMBL" id="AF349515">
    <property type="protein sequence ID" value="AAK15562.1"/>
    <property type="molecule type" value="mRNA"/>
</dbReference>
<dbReference type="EMBL" id="AY039574">
    <property type="protein sequence ID" value="AAK62629.1"/>
    <property type="molecule type" value="mRNA"/>
</dbReference>
<dbReference type="EMBL" id="AY129490">
    <property type="protein sequence ID" value="AAM91076.1"/>
    <property type="molecule type" value="mRNA"/>
</dbReference>
<dbReference type="EMBL" id="AK317457">
    <property type="protein sequence ID" value="BAH20124.1"/>
    <property type="molecule type" value="mRNA"/>
</dbReference>
<dbReference type="RefSeq" id="NP_001030698.1">
    <molecule id="Q9FPF0-2"/>
    <property type="nucleotide sequence ID" value="NM_001035621.1"/>
</dbReference>
<dbReference type="RefSeq" id="NP_188117.1">
    <molecule id="Q9FPF0-1"/>
    <property type="nucleotide sequence ID" value="NM_112361.5"/>
</dbReference>
<dbReference type="RefSeq" id="NP_850588.1">
    <molecule id="Q9FPF0-2"/>
    <property type="nucleotide sequence ID" value="NM_180257.1"/>
</dbReference>
<dbReference type="SMR" id="Q9FPF0"/>
<dbReference type="BioGRID" id="6062">
    <property type="interactions" value="7"/>
</dbReference>
<dbReference type="FunCoup" id="Q9FPF0">
    <property type="interactions" value="723"/>
</dbReference>
<dbReference type="IntAct" id="Q9FPF0">
    <property type="interactions" value="2"/>
</dbReference>
<dbReference type="STRING" id="3702.Q9FPF0"/>
<dbReference type="iPTMnet" id="Q9FPF0"/>
<dbReference type="MetOSite" id="Q9FPF0"/>
<dbReference type="PaxDb" id="3702-AT3G14990.1"/>
<dbReference type="ProteomicsDB" id="222206">
    <molecule id="Q9FPF0-1"/>
</dbReference>
<dbReference type="EnsemblPlants" id="AT3G14990.1">
    <molecule id="Q9FPF0-1"/>
    <property type="protein sequence ID" value="AT3G14990.1"/>
    <property type="gene ID" value="AT3G14990"/>
</dbReference>
<dbReference type="EnsemblPlants" id="AT3G14990.2">
    <molecule id="Q9FPF0-2"/>
    <property type="protein sequence ID" value="AT3G14990.2"/>
    <property type="gene ID" value="AT3G14990"/>
</dbReference>
<dbReference type="EnsemblPlants" id="AT3G14990.3">
    <molecule id="Q9FPF0-2"/>
    <property type="protein sequence ID" value="AT3G14990.3"/>
    <property type="gene ID" value="AT3G14990"/>
</dbReference>
<dbReference type="GeneID" id="820728"/>
<dbReference type="Gramene" id="AT3G14990.1">
    <molecule id="Q9FPF0-1"/>
    <property type="protein sequence ID" value="AT3G14990.1"/>
    <property type="gene ID" value="AT3G14990"/>
</dbReference>
<dbReference type="Gramene" id="AT3G14990.2">
    <molecule id="Q9FPF0-2"/>
    <property type="protein sequence ID" value="AT3G14990.2"/>
    <property type="gene ID" value="AT3G14990"/>
</dbReference>
<dbReference type="Gramene" id="AT3G14990.3">
    <molecule id="Q9FPF0-2"/>
    <property type="protein sequence ID" value="AT3G14990.3"/>
    <property type="gene ID" value="AT3G14990"/>
</dbReference>
<dbReference type="KEGG" id="ath:AT3G14990"/>
<dbReference type="Araport" id="AT3G14990"/>
<dbReference type="TAIR" id="AT3G14990">
    <property type="gene designation" value="DJ1A"/>
</dbReference>
<dbReference type="eggNOG" id="KOG2764">
    <property type="taxonomic scope" value="Eukaryota"/>
</dbReference>
<dbReference type="HOGENOM" id="CLU_000445_44_0_1"/>
<dbReference type="InParanoid" id="Q9FPF0"/>
<dbReference type="OMA" id="VEWTPND"/>
<dbReference type="OrthoDB" id="543156at2759"/>
<dbReference type="PhylomeDB" id="Q9FPF0"/>
<dbReference type="BRENDA" id="4.2.1.130">
    <property type="organism ID" value="399"/>
</dbReference>
<dbReference type="CD-CODE" id="4299E36E">
    <property type="entry name" value="Nucleolus"/>
</dbReference>
<dbReference type="PRO" id="PR:Q9FPF0"/>
<dbReference type="Proteomes" id="UP000006548">
    <property type="component" value="Chromosome 3"/>
</dbReference>
<dbReference type="ExpressionAtlas" id="Q9FPF0">
    <property type="expression patterns" value="baseline and differential"/>
</dbReference>
<dbReference type="GO" id="GO:0005829">
    <property type="term" value="C:cytosol"/>
    <property type="evidence" value="ECO:0000314"/>
    <property type="project" value="UniProtKB"/>
</dbReference>
<dbReference type="GO" id="GO:0005634">
    <property type="term" value="C:nucleus"/>
    <property type="evidence" value="ECO:0000314"/>
    <property type="project" value="UniProtKB"/>
</dbReference>
<dbReference type="GO" id="GO:0000325">
    <property type="term" value="C:plant-type vacuole"/>
    <property type="evidence" value="ECO:0007005"/>
    <property type="project" value="TAIR"/>
</dbReference>
<dbReference type="GO" id="GO:0005886">
    <property type="term" value="C:plasma membrane"/>
    <property type="evidence" value="ECO:0007005"/>
    <property type="project" value="TAIR"/>
</dbReference>
<dbReference type="GO" id="GO:0009506">
    <property type="term" value="C:plasmodesma"/>
    <property type="evidence" value="ECO:0007005"/>
    <property type="project" value="TAIR"/>
</dbReference>
<dbReference type="GO" id="GO:0019172">
    <property type="term" value="F:glyoxalase III activity"/>
    <property type="evidence" value="ECO:0000314"/>
    <property type="project" value="TAIR"/>
</dbReference>
<dbReference type="GO" id="GO:1900409">
    <property type="term" value="P:positive regulation of cellular response to oxidative stress"/>
    <property type="evidence" value="ECO:0000314"/>
    <property type="project" value="UniProtKB"/>
</dbReference>
<dbReference type="CDD" id="cd03135">
    <property type="entry name" value="GATase1_DJ-1"/>
    <property type="match status" value="2"/>
</dbReference>
<dbReference type="FunFam" id="3.40.50.880:FF:000015">
    <property type="entry name" value="Protein DJ-1 homolog C"/>
    <property type="match status" value="2"/>
</dbReference>
<dbReference type="Gene3D" id="3.40.50.880">
    <property type="match status" value="2"/>
</dbReference>
<dbReference type="InterPro" id="IPR029062">
    <property type="entry name" value="Class_I_gatase-like"/>
</dbReference>
<dbReference type="InterPro" id="IPR006287">
    <property type="entry name" value="DJ-1"/>
</dbReference>
<dbReference type="InterPro" id="IPR002818">
    <property type="entry name" value="DJ-1/PfpI"/>
</dbReference>
<dbReference type="InterPro" id="IPR050325">
    <property type="entry name" value="Prot/Nucl_acid_deglycase"/>
</dbReference>
<dbReference type="NCBIfam" id="TIGR01383">
    <property type="entry name" value="not_thiJ"/>
    <property type="match status" value="2"/>
</dbReference>
<dbReference type="PANTHER" id="PTHR48094:SF4">
    <property type="entry name" value="PROTEIN DJ-1 HOMOLOG A"/>
    <property type="match status" value="1"/>
</dbReference>
<dbReference type="PANTHER" id="PTHR48094">
    <property type="entry name" value="PROTEIN/NUCLEIC ACID DEGLYCASE DJ-1-RELATED"/>
    <property type="match status" value="1"/>
</dbReference>
<dbReference type="Pfam" id="PF01965">
    <property type="entry name" value="DJ-1_PfpI"/>
    <property type="match status" value="2"/>
</dbReference>
<dbReference type="SUPFAM" id="SSF52317">
    <property type="entry name" value="Class I glutamine amidotransferase-like"/>
    <property type="match status" value="2"/>
</dbReference>
<organism>
    <name type="scientific">Arabidopsis thaliana</name>
    <name type="common">Mouse-ear cress</name>
    <dbReference type="NCBI Taxonomy" id="3702"/>
    <lineage>
        <taxon>Eukaryota</taxon>
        <taxon>Viridiplantae</taxon>
        <taxon>Streptophyta</taxon>
        <taxon>Embryophyta</taxon>
        <taxon>Tracheophyta</taxon>
        <taxon>Spermatophyta</taxon>
        <taxon>Magnoliopsida</taxon>
        <taxon>eudicotyledons</taxon>
        <taxon>Gunneridae</taxon>
        <taxon>Pentapetalae</taxon>
        <taxon>rosids</taxon>
        <taxon>malvids</taxon>
        <taxon>Brassicales</taxon>
        <taxon>Brassicaceae</taxon>
        <taxon>Camelineae</taxon>
        <taxon>Arabidopsis</taxon>
    </lineage>
</organism>
<proteinExistence type="evidence at protein level"/>
<keyword id="KW-0025">Alternative splicing</keyword>
<keyword id="KW-0963">Cytoplasm</keyword>
<keyword id="KW-0539">Nucleus</keyword>
<keyword id="KW-1185">Reference proteome</keyword>
<keyword id="KW-0677">Repeat</keyword>
<keyword id="KW-0346">Stress response</keyword>
<protein>
    <recommendedName>
        <fullName>Protein DJ-1 homolog A</fullName>
        <shortName>AtDJ1A</shortName>
    </recommendedName>
</protein>
<evidence type="ECO:0000269" key="1">
    <source>
    </source>
</evidence>
<evidence type="ECO:0000269" key="2">
    <source>
    </source>
</evidence>
<evidence type="ECO:0000269" key="3">
    <source>
    </source>
</evidence>
<evidence type="ECO:0000305" key="4"/>
<comment type="function">
    <text evidence="2">Involved in oxidative stress response. Confers protection against diverse stresses by binding both CSD1 and GPX2 and mediating the cytosolic activation of the Cu-Zn-dependent superoxide dismutase activity of CSD1.</text>
</comment>
<comment type="subunit">
    <text evidence="2 3 4">Homodimer (Probable). Interacts with CSD1 and GPX2.</text>
</comment>
<comment type="subcellular location">
    <subcellularLocation>
        <location evidence="2">Cytoplasm</location>
        <location evidence="2">Cytosol</location>
    </subcellularLocation>
    <subcellularLocation>
        <location evidence="2">Nucleus</location>
    </subcellularLocation>
</comment>
<comment type="alternative products">
    <event type="alternative splicing"/>
    <isoform>
        <id>Q9FPF0-1</id>
        <name>1</name>
        <sequence type="displayed"/>
    </isoform>
    <isoform>
        <id>Q9FPF0-2</id>
        <name>2</name>
        <sequence type="described" ref="VSP_046013"/>
    </isoform>
</comment>
<comment type="induction">
    <text evidence="1 2">By high light, copper, hydrogen peroxide, methyl viologen and cis-jasmone, but not methyl jasmonate.</text>
</comment>
<comment type="disruption phenotype">
    <text evidence="2">No visible phenotype under normal growth conditions, but mutant plants have increased susceptibility to oxidative stress-induced cell death and accelerated cell death in aging plants.</text>
</comment>
<comment type="similarity">
    <text evidence="4">Belongs to the peptidase C56 family.</text>
</comment>
<reference key="1">
    <citation type="journal article" date="2000" name="DNA Res.">
        <title>Structural analysis of Arabidopsis thaliana chromosome 3. II. Sequence features of the 4,251,695 bp regions covered by 90 P1, TAC and BAC clones.</title>
        <authorList>
            <person name="Kaneko T."/>
            <person name="Katoh T."/>
            <person name="Sato S."/>
            <person name="Nakamura Y."/>
            <person name="Asamizu E."/>
            <person name="Tabata S."/>
        </authorList>
    </citation>
    <scope>NUCLEOTIDE SEQUENCE [LARGE SCALE GENOMIC DNA]</scope>
    <source>
        <strain>cv. Columbia</strain>
    </source>
</reference>
<reference key="2">
    <citation type="journal article" date="2017" name="Plant J.">
        <title>Araport11: a complete reannotation of the Arabidopsis thaliana reference genome.</title>
        <authorList>
            <person name="Cheng C.Y."/>
            <person name="Krishnakumar V."/>
            <person name="Chan A.P."/>
            <person name="Thibaud-Nissen F."/>
            <person name="Schobel S."/>
            <person name="Town C.D."/>
        </authorList>
    </citation>
    <scope>GENOME REANNOTATION</scope>
    <source>
        <strain>cv. Columbia</strain>
        <tissue>Rosette leaf</tissue>
    </source>
</reference>
<reference key="3">
    <citation type="journal article" date="2003" name="Science">
        <title>Empirical analysis of transcriptional activity in the Arabidopsis genome.</title>
        <authorList>
            <person name="Yamada K."/>
            <person name="Lim J."/>
            <person name="Dale J.M."/>
            <person name="Chen H."/>
            <person name="Shinn P."/>
            <person name="Palm C.J."/>
            <person name="Southwick A.M."/>
            <person name="Wu H.C."/>
            <person name="Kim C.J."/>
            <person name="Nguyen M."/>
            <person name="Pham P.K."/>
            <person name="Cheuk R.F."/>
            <person name="Karlin-Newmann G."/>
            <person name="Liu S.X."/>
            <person name="Lam B."/>
            <person name="Sakano H."/>
            <person name="Wu T."/>
            <person name="Yu G."/>
            <person name="Miranda M."/>
            <person name="Quach H.L."/>
            <person name="Tripp M."/>
            <person name="Chang C.H."/>
            <person name="Lee J.M."/>
            <person name="Toriumi M.J."/>
            <person name="Chan M.M."/>
            <person name="Tang C.C."/>
            <person name="Onodera C.S."/>
            <person name="Deng J.M."/>
            <person name="Akiyama K."/>
            <person name="Ansari Y."/>
            <person name="Arakawa T."/>
            <person name="Banh J."/>
            <person name="Banno F."/>
            <person name="Bowser L."/>
            <person name="Brooks S.Y."/>
            <person name="Carninci P."/>
            <person name="Chao Q."/>
            <person name="Choy N."/>
            <person name="Enju A."/>
            <person name="Goldsmith A.D."/>
            <person name="Gurjal M."/>
            <person name="Hansen N.F."/>
            <person name="Hayashizaki Y."/>
            <person name="Johnson-Hopson C."/>
            <person name="Hsuan V.W."/>
            <person name="Iida K."/>
            <person name="Karnes M."/>
            <person name="Khan S."/>
            <person name="Koesema E."/>
            <person name="Ishida J."/>
            <person name="Jiang P.X."/>
            <person name="Jones T."/>
            <person name="Kawai J."/>
            <person name="Kamiya A."/>
            <person name="Meyers C."/>
            <person name="Nakajima M."/>
            <person name="Narusaka M."/>
            <person name="Seki M."/>
            <person name="Sakurai T."/>
            <person name="Satou M."/>
            <person name="Tamse R."/>
            <person name="Vaysberg M."/>
            <person name="Wallender E.K."/>
            <person name="Wong C."/>
            <person name="Yamamura Y."/>
            <person name="Yuan S."/>
            <person name="Shinozaki K."/>
            <person name="Davis R.W."/>
            <person name="Theologis A."/>
            <person name="Ecker J.R."/>
        </authorList>
    </citation>
    <scope>NUCLEOTIDE SEQUENCE [LARGE SCALE MRNA] (ISOFORM 1)</scope>
    <source>
        <strain>cv. Columbia</strain>
    </source>
</reference>
<reference key="4">
    <citation type="journal article" date="2009" name="DNA Res.">
        <title>Analysis of multiple occurrences of alternative splicing events in Arabidopsis thaliana using novel sequenced full-length cDNAs.</title>
        <authorList>
            <person name="Iida K."/>
            <person name="Fukami-Kobayashi K."/>
            <person name="Toyoda A."/>
            <person name="Sakaki Y."/>
            <person name="Kobayashi M."/>
            <person name="Seki M."/>
            <person name="Shinozaki K."/>
        </authorList>
    </citation>
    <scope>NUCLEOTIDE SEQUENCE [LARGE SCALE MRNA] (ISOFORM 1)</scope>
    <source>
        <strain>cv. Columbia</strain>
    </source>
</reference>
<reference key="5">
    <citation type="journal article" date="2008" name="Proc. Natl. Acad. Sci. U.S.A.">
        <title>cis-Jasmone induces Arabidopsis genes that affect the chemical ecology of multitrophic interactions with aphids and their parasitoids.</title>
        <authorList>
            <person name="Bruce T.J."/>
            <person name="Matthes M.C."/>
            <person name="Chamberlain K."/>
            <person name="Woodcock C.M."/>
            <person name="Mohib A."/>
            <person name="Webster B."/>
            <person name="Smart L.E."/>
            <person name="Birkett M.A."/>
            <person name="Pickett J.A."/>
            <person name="Napier J.A."/>
        </authorList>
    </citation>
    <scope>INDUCTION BY CIS-JASMONE</scope>
</reference>
<reference key="6">
    <citation type="journal article" date="2010" name="J. Cell Sci.">
        <title>The Arabidopsis DJ-1a protein confers stress protection through cytosolic SOD activation.</title>
        <authorList>
            <person name="Xu X.M."/>
            <person name="Lin H."/>
            <person name="Maple J."/>
            <person name="Bjoerkblom B."/>
            <person name="Alves G."/>
            <person name="Larsen J.P."/>
            <person name="Moeller S.G."/>
        </authorList>
    </citation>
    <scope>FUNCTION</scope>
    <scope>SUBCELLULAR LOCATION</scope>
    <scope>INTERACTION WITH CSD1 AND GPX2</scope>
    <scope>INDUCTION</scope>
    <scope>DISRUPTION PHENOTYPE</scope>
</reference>
<reference key="7">
    <citation type="journal article" date="2013" name="FEBS J.">
        <title>Novel glyoxalases from Arabidopsis thaliana.</title>
        <authorList>
            <person name="Kwon K."/>
            <person name="Choi D."/>
            <person name="Hyun J.K."/>
            <person name="Jung H.S."/>
            <person name="Baek K."/>
            <person name="Park C."/>
        </authorList>
    </citation>
    <scope>SUBUNIT</scope>
</reference>
<name>DJ1A_ARATH</name>
<gene>
    <name type="primary">DJ1A</name>
    <name type="ordered locus">At3g14990</name>
    <name type="ORF">K15M2.13</name>
</gene>
<sequence length="392" mass="41857">MASFTKTVLIPIAHGTEPLEAVAMITVLRRGGADVTVASVETQVGVDACHGIKMVADTLLSDITDSVFDLIVLPGGLPGGETLKNCKSLENMVKKQDSDGRLNAAICCAPALALGTWGLLEGKKATGYPVFMEKLAATCATAVESRVQIDGRIVTSRGPGTTIEFSITLIEQLFGKEKADEVSSILLLRPNPGEEFTFTELNQTNWSFEDTPQILVPIAEESEEIEAIALVDILRRAKANVVIAAVGNSLEVEGSRKAKLVAEVLLDEVAEKSFDLIVLPGGLNGAQRFASCEKLVNMLRKQAEANKPYGGICASPAYVFEPNGLLKGKKATTHPVVSDKLSDKSHIEHRVVVDGNVITSRAPGTAMEFSLAIVEKFYGREKALQLGKATLV</sequence>